<organism>
    <name type="scientific">Bos taurus</name>
    <name type="common">Bovine</name>
    <dbReference type="NCBI Taxonomy" id="9913"/>
    <lineage>
        <taxon>Eukaryota</taxon>
        <taxon>Metazoa</taxon>
        <taxon>Chordata</taxon>
        <taxon>Craniata</taxon>
        <taxon>Vertebrata</taxon>
        <taxon>Euteleostomi</taxon>
        <taxon>Mammalia</taxon>
        <taxon>Eutheria</taxon>
        <taxon>Laurasiatheria</taxon>
        <taxon>Artiodactyla</taxon>
        <taxon>Ruminantia</taxon>
        <taxon>Pecora</taxon>
        <taxon>Bovidae</taxon>
        <taxon>Bovinae</taxon>
        <taxon>Bos</taxon>
    </lineage>
</organism>
<name>RPRM_BOVIN</name>
<comment type="function">
    <text evidence="1">May be involved in the regulation of p53-dependent G2 arrest of the cell cycle. Seems to induce cell cycle arrest by inhibiting CDK1 activity and nuclear translocation of the CDC2 cyclin B1 complex (By similarity).</text>
</comment>
<comment type="subcellular location">
    <subcellularLocation>
        <location evidence="1">Cytoplasm</location>
    </subcellularLocation>
    <subcellularLocation>
        <location evidence="4">Membrane</location>
        <topology evidence="4">Single-pass membrane protein</topology>
    </subcellularLocation>
</comment>
<comment type="similarity">
    <text evidence="4">Belongs to the reprimo family.</text>
</comment>
<keyword id="KW-0963">Cytoplasm</keyword>
<keyword id="KW-0325">Glycoprotein</keyword>
<keyword id="KW-0472">Membrane</keyword>
<keyword id="KW-0597">Phosphoprotein</keyword>
<keyword id="KW-1185">Reference proteome</keyword>
<keyword id="KW-0812">Transmembrane</keyword>
<keyword id="KW-1133">Transmembrane helix</keyword>
<feature type="chain" id="PRO_0000312751" description="Protein reprimo">
    <location>
        <begin position="1"/>
        <end position="109"/>
    </location>
</feature>
<feature type="transmembrane region" description="Helical" evidence="3">
    <location>
        <begin position="56"/>
        <end position="76"/>
    </location>
</feature>
<feature type="modified residue" description="Phosphoserine" evidence="2">
    <location>
        <position position="98"/>
    </location>
</feature>
<feature type="glycosylation site" description="N-linked (GlcNAc...) asparagine" evidence="3">
    <location>
        <position position="7"/>
    </location>
</feature>
<feature type="glycosylation site" description="N-linked (GlcNAc...) asparagine" evidence="3">
    <location>
        <position position="18"/>
    </location>
</feature>
<accession>Q1RMT2</accession>
<reference key="1">
    <citation type="submission" date="2006-04" db="EMBL/GenBank/DDBJ databases">
        <authorList>
            <consortium name="NIH - Mammalian Gene Collection (MGC) project"/>
        </authorList>
    </citation>
    <scope>NUCLEOTIDE SEQUENCE [LARGE SCALE MRNA]</scope>
    <source>
        <strain>Hereford</strain>
        <tissue>Uterus</tissue>
    </source>
</reference>
<protein>
    <recommendedName>
        <fullName>Protein reprimo</fullName>
    </recommendedName>
</protein>
<sequence length="109" mass="11806">MNPALGNQTDVAGLFLANSSEALERAMRCCTQASVVTDDGFAEGGPDERSLYIMRVVQIAVMCVLSLTVVFGIFFLGCNLLIKSEGMINFLVKDRRPSKEVEAVVVGPY</sequence>
<proteinExistence type="inferred from homology"/>
<gene>
    <name type="primary">RPRM</name>
</gene>
<evidence type="ECO:0000250" key="1"/>
<evidence type="ECO:0000250" key="2">
    <source>
        <dbReference type="UniProtKB" id="Q9JJ72"/>
    </source>
</evidence>
<evidence type="ECO:0000255" key="3"/>
<evidence type="ECO:0000305" key="4"/>
<dbReference type="EMBL" id="BC114727">
    <property type="protein sequence ID" value="AAI14728.1"/>
    <property type="molecule type" value="mRNA"/>
</dbReference>
<dbReference type="RefSeq" id="NP_001074208.1">
    <property type="nucleotide sequence ID" value="NM_001080739.1"/>
</dbReference>
<dbReference type="FunCoup" id="Q1RMT2">
    <property type="interactions" value="200"/>
</dbReference>
<dbReference type="STRING" id="9913.ENSBTAP00000028688"/>
<dbReference type="GlyCosmos" id="Q1RMT2">
    <property type="glycosylation" value="2 sites, No reported glycans"/>
</dbReference>
<dbReference type="GlyGen" id="Q1RMT2">
    <property type="glycosylation" value="2 sites"/>
</dbReference>
<dbReference type="PaxDb" id="9913-ENSBTAP00000028688"/>
<dbReference type="Ensembl" id="ENSBTAT00000028688.3">
    <property type="protein sequence ID" value="ENSBTAP00000028688.2"/>
    <property type="gene ID" value="ENSBTAG00000021526.3"/>
</dbReference>
<dbReference type="GeneID" id="614739"/>
<dbReference type="KEGG" id="bta:614739"/>
<dbReference type="CTD" id="56475"/>
<dbReference type="VEuPathDB" id="HostDB:ENSBTAG00000021526"/>
<dbReference type="VGNC" id="VGNC:34129">
    <property type="gene designation" value="RPRM"/>
</dbReference>
<dbReference type="eggNOG" id="ENOG502S262">
    <property type="taxonomic scope" value="Eukaryota"/>
</dbReference>
<dbReference type="GeneTree" id="ENSGT00390000010523"/>
<dbReference type="HOGENOM" id="CLU_170456_0_0_1"/>
<dbReference type="InParanoid" id="Q1RMT2"/>
<dbReference type="OMA" id="LKCCNFS"/>
<dbReference type="OrthoDB" id="8570856at2759"/>
<dbReference type="TreeFam" id="TF332720"/>
<dbReference type="Proteomes" id="UP000009136">
    <property type="component" value="Chromosome 2"/>
</dbReference>
<dbReference type="Bgee" id="ENSBTAG00000021526">
    <property type="expression patterns" value="Expressed in vas deferens and 72 other cell types or tissues"/>
</dbReference>
<dbReference type="GO" id="GO:0005737">
    <property type="term" value="C:cytoplasm"/>
    <property type="evidence" value="ECO:0000318"/>
    <property type="project" value="GO_Central"/>
</dbReference>
<dbReference type="GO" id="GO:0016020">
    <property type="term" value="C:membrane"/>
    <property type="evidence" value="ECO:0007669"/>
    <property type="project" value="UniProtKB-SubCell"/>
</dbReference>
<dbReference type="GO" id="GO:0007346">
    <property type="term" value="P:regulation of mitotic cell cycle"/>
    <property type="evidence" value="ECO:0000318"/>
    <property type="project" value="GO_Central"/>
</dbReference>
<dbReference type="InterPro" id="IPR043383">
    <property type="entry name" value="Reprimo_fam"/>
</dbReference>
<dbReference type="PANTHER" id="PTHR28649:SF2">
    <property type="entry name" value="PROTEIN REPRIMO"/>
    <property type="match status" value="1"/>
</dbReference>
<dbReference type="PANTHER" id="PTHR28649">
    <property type="entry name" value="PROTEIN REPRIMO-RELATED"/>
    <property type="match status" value="1"/>
</dbReference>